<proteinExistence type="evidence at protein level"/>
<comment type="function">
    <text evidence="1">Bifunctional enzyme with both catalase and broad-spectrum peroxidase activity.</text>
</comment>
<comment type="catalytic activity">
    <reaction evidence="1">
        <text>H2O2 + AH2 = A + 2 H2O</text>
        <dbReference type="Rhea" id="RHEA:30275"/>
        <dbReference type="ChEBI" id="CHEBI:13193"/>
        <dbReference type="ChEBI" id="CHEBI:15377"/>
        <dbReference type="ChEBI" id="CHEBI:16240"/>
        <dbReference type="ChEBI" id="CHEBI:17499"/>
        <dbReference type="EC" id="1.11.1.21"/>
    </reaction>
</comment>
<comment type="catalytic activity">
    <reaction evidence="1">
        <text>2 H2O2 = O2 + 2 H2O</text>
        <dbReference type="Rhea" id="RHEA:20309"/>
        <dbReference type="ChEBI" id="CHEBI:15377"/>
        <dbReference type="ChEBI" id="CHEBI:15379"/>
        <dbReference type="ChEBI" id="CHEBI:16240"/>
        <dbReference type="EC" id="1.11.1.21"/>
    </reaction>
</comment>
<comment type="cofactor">
    <cofactor evidence="1">
        <name>heme b</name>
        <dbReference type="ChEBI" id="CHEBI:60344"/>
    </cofactor>
    <text evidence="1">Binds 1 heme b (iron(II)-protoporphyrin IX) group per monomer.</text>
</comment>
<comment type="subunit">
    <text evidence="1">Homodimer or homotetramer.</text>
</comment>
<comment type="subcellular location">
    <subcellularLocation>
        <location>Cytoplasm</location>
    </subcellularLocation>
    <text>Found in sexual structures such as Huelle cells, but not in primordia, hyphae and conidiophores.</text>
</comment>
<comment type="induction">
    <text evidence="3">Induced by transcription factor stuA upon carbon starvation and during early sexual development.</text>
</comment>
<comment type="PTM">
    <text evidence="1">Formation of the three residue Trp-Tyr-Met cross-link is important for the catalase, but not the peroxidase activity of the enzyme.</text>
</comment>
<comment type="similarity">
    <text evidence="1">Belongs to the peroxidase family. Peroxidase/catalase subfamily.</text>
</comment>
<accession>Q96VT4</accession>
<accession>C8VCF7</accession>
<accession>Q5AWE2</accession>
<gene>
    <name evidence="1" type="primary">katG</name>
    <name type="synonym">cpeA</name>
    <name type="ORF">AN7388</name>
</gene>
<dbReference type="EC" id="1.11.1.21" evidence="1"/>
<dbReference type="EMBL" id="AJ305225">
    <property type="protein sequence ID" value="CAC59821.1"/>
    <property type="molecule type" value="Genomic_DNA"/>
</dbReference>
<dbReference type="EMBL" id="AACD01000128">
    <property type="protein sequence ID" value="EAA61759.1"/>
    <property type="molecule type" value="Genomic_DNA"/>
</dbReference>
<dbReference type="EMBL" id="BN001304">
    <property type="protein sequence ID" value="CBF78482.1"/>
    <property type="molecule type" value="Genomic_DNA"/>
</dbReference>
<dbReference type="RefSeq" id="XP_680657.1">
    <property type="nucleotide sequence ID" value="XM_675565.1"/>
</dbReference>
<dbReference type="SMR" id="Q96VT4"/>
<dbReference type="STRING" id="227321.Q96VT4"/>
<dbReference type="PeroxiBase" id="1905">
    <property type="entry name" value="AniCP"/>
</dbReference>
<dbReference type="EnsemblFungi" id="CBF78482">
    <property type="protein sequence ID" value="CBF78482"/>
    <property type="gene ID" value="ANIA_07388"/>
</dbReference>
<dbReference type="KEGG" id="ani:ANIA_07388"/>
<dbReference type="VEuPathDB" id="FungiDB:AN7388"/>
<dbReference type="eggNOG" id="ENOG502QTDY">
    <property type="taxonomic scope" value="Eukaryota"/>
</dbReference>
<dbReference type="HOGENOM" id="CLU_025424_2_0_1"/>
<dbReference type="InParanoid" id="Q96VT4"/>
<dbReference type="OMA" id="GPETTWL"/>
<dbReference type="OrthoDB" id="407695at2759"/>
<dbReference type="Proteomes" id="UP000000560">
    <property type="component" value="Chromosome IV"/>
</dbReference>
<dbReference type="GO" id="GO:0005737">
    <property type="term" value="C:cytoplasm"/>
    <property type="evidence" value="ECO:0000314"/>
    <property type="project" value="AspGD"/>
</dbReference>
<dbReference type="GO" id="GO:0005829">
    <property type="term" value="C:cytosol"/>
    <property type="evidence" value="ECO:0000318"/>
    <property type="project" value="GO_Central"/>
</dbReference>
<dbReference type="GO" id="GO:0005576">
    <property type="term" value="C:extracellular region"/>
    <property type="evidence" value="ECO:0000314"/>
    <property type="project" value="AspGD"/>
</dbReference>
<dbReference type="GO" id="GO:0004096">
    <property type="term" value="F:catalase activity"/>
    <property type="evidence" value="ECO:0000314"/>
    <property type="project" value="AspGD"/>
</dbReference>
<dbReference type="GO" id="GO:0020037">
    <property type="term" value="F:heme binding"/>
    <property type="evidence" value="ECO:0000318"/>
    <property type="project" value="GO_Central"/>
</dbReference>
<dbReference type="GO" id="GO:0046872">
    <property type="term" value="F:metal ion binding"/>
    <property type="evidence" value="ECO:0007669"/>
    <property type="project" value="UniProtKB-KW"/>
</dbReference>
<dbReference type="GO" id="GO:0034605">
    <property type="term" value="P:cellular response to heat"/>
    <property type="evidence" value="ECO:0000270"/>
    <property type="project" value="AspGD"/>
</dbReference>
<dbReference type="GO" id="GO:0070301">
    <property type="term" value="P:cellular response to hydrogen peroxide"/>
    <property type="evidence" value="ECO:0000318"/>
    <property type="project" value="GO_Central"/>
</dbReference>
<dbReference type="GO" id="GO:0009267">
    <property type="term" value="P:cellular response to starvation"/>
    <property type="evidence" value="ECO:0000270"/>
    <property type="project" value="AspGD"/>
</dbReference>
<dbReference type="GO" id="GO:0042744">
    <property type="term" value="P:hydrogen peroxide catabolic process"/>
    <property type="evidence" value="ECO:0000318"/>
    <property type="project" value="GO_Central"/>
</dbReference>
<dbReference type="GO" id="GO:0000302">
    <property type="term" value="P:response to reactive oxygen species"/>
    <property type="evidence" value="ECO:0000270"/>
    <property type="project" value="AspGD"/>
</dbReference>
<dbReference type="GO" id="GO:0019953">
    <property type="term" value="P:sexual reproduction"/>
    <property type="evidence" value="ECO:0000270"/>
    <property type="project" value="AspGD"/>
</dbReference>
<dbReference type="CDD" id="cd00649">
    <property type="entry name" value="catalase_peroxidase_1"/>
    <property type="match status" value="1"/>
</dbReference>
<dbReference type="CDD" id="cd08200">
    <property type="entry name" value="catalase_peroxidase_2"/>
    <property type="match status" value="1"/>
</dbReference>
<dbReference type="FunFam" id="1.10.420.10:FF:000002">
    <property type="entry name" value="Catalase-peroxidase"/>
    <property type="match status" value="1"/>
</dbReference>
<dbReference type="FunFam" id="1.10.420.10:FF:000004">
    <property type="entry name" value="Catalase-peroxidase"/>
    <property type="match status" value="1"/>
</dbReference>
<dbReference type="FunFam" id="1.10.520.10:FF:000002">
    <property type="entry name" value="Catalase-peroxidase"/>
    <property type="match status" value="1"/>
</dbReference>
<dbReference type="Gene3D" id="1.10.520.10">
    <property type="match status" value="2"/>
</dbReference>
<dbReference type="Gene3D" id="1.10.420.10">
    <property type="entry name" value="Peroxidase, domain 2"/>
    <property type="match status" value="2"/>
</dbReference>
<dbReference type="HAMAP" id="MF_01961">
    <property type="entry name" value="Catal_peroxid"/>
    <property type="match status" value="1"/>
</dbReference>
<dbReference type="InterPro" id="IPR000763">
    <property type="entry name" value="Catalase_peroxidase"/>
</dbReference>
<dbReference type="InterPro" id="IPR002016">
    <property type="entry name" value="Haem_peroxidase"/>
</dbReference>
<dbReference type="InterPro" id="IPR010255">
    <property type="entry name" value="Haem_peroxidase_sf"/>
</dbReference>
<dbReference type="InterPro" id="IPR019794">
    <property type="entry name" value="Peroxidases_AS"/>
</dbReference>
<dbReference type="InterPro" id="IPR019793">
    <property type="entry name" value="Peroxidases_heam-ligand_BS"/>
</dbReference>
<dbReference type="NCBIfam" id="TIGR00198">
    <property type="entry name" value="cat_per_HPI"/>
    <property type="match status" value="1"/>
</dbReference>
<dbReference type="NCBIfam" id="NF011635">
    <property type="entry name" value="PRK15061.1"/>
    <property type="match status" value="1"/>
</dbReference>
<dbReference type="PANTHER" id="PTHR30555:SF0">
    <property type="entry name" value="CATALASE-PEROXIDASE"/>
    <property type="match status" value="1"/>
</dbReference>
<dbReference type="PANTHER" id="PTHR30555">
    <property type="entry name" value="HYDROPEROXIDASE I, BIFUNCTIONAL CATALASE-PEROXIDASE"/>
    <property type="match status" value="1"/>
</dbReference>
<dbReference type="Pfam" id="PF00141">
    <property type="entry name" value="peroxidase"/>
    <property type="match status" value="2"/>
</dbReference>
<dbReference type="PRINTS" id="PR00460">
    <property type="entry name" value="BPEROXIDASE"/>
</dbReference>
<dbReference type="PRINTS" id="PR00458">
    <property type="entry name" value="PEROXIDASE"/>
</dbReference>
<dbReference type="SUPFAM" id="SSF48113">
    <property type="entry name" value="Heme-dependent peroxidases"/>
    <property type="match status" value="2"/>
</dbReference>
<dbReference type="PROSITE" id="PS00435">
    <property type="entry name" value="PEROXIDASE_1"/>
    <property type="match status" value="1"/>
</dbReference>
<dbReference type="PROSITE" id="PS00436">
    <property type="entry name" value="PEROXIDASE_2"/>
    <property type="match status" value="1"/>
</dbReference>
<dbReference type="PROSITE" id="PS50873">
    <property type="entry name" value="PEROXIDASE_4"/>
    <property type="match status" value="1"/>
</dbReference>
<organism>
    <name type="scientific">Emericella nidulans (strain FGSC A4 / ATCC 38163 / CBS 112.46 / NRRL 194 / M139)</name>
    <name type="common">Aspergillus nidulans</name>
    <dbReference type="NCBI Taxonomy" id="227321"/>
    <lineage>
        <taxon>Eukaryota</taxon>
        <taxon>Fungi</taxon>
        <taxon>Dikarya</taxon>
        <taxon>Ascomycota</taxon>
        <taxon>Pezizomycotina</taxon>
        <taxon>Eurotiomycetes</taxon>
        <taxon>Eurotiomycetidae</taxon>
        <taxon>Eurotiales</taxon>
        <taxon>Aspergillaceae</taxon>
        <taxon>Aspergillus</taxon>
        <taxon>Aspergillus subgen. Nidulantes</taxon>
    </lineage>
</organism>
<reference key="1">
    <citation type="journal article" date="2002" name="Eukaryot. Cell">
        <title>Aspergillus nidulans catalase-peroxidase gene (cpeA) is transcriptionally induced during sexual development through the transcription factor StuA.</title>
        <authorList>
            <person name="Scherer M."/>
            <person name="Wei H."/>
            <person name="Liese R."/>
            <person name="Fischer R."/>
        </authorList>
    </citation>
    <scope>NUCLEOTIDE SEQUENCE [GENOMIC DNA / MRNA]</scope>
    <scope>PROTEIN SEQUENCE OF 345-374 AND 448-459</scope>
    <scope>INDUCTION</scope>
    <source>
        <strain>FGSC A4 / ATCC 38163 / CBS 112.46 / NRRL 194 / M139</strain>
    </source>
</reference>
<reference key="2">
    <citation type="journal article" date="2005" name="Nature">
        <title>Sequencing of Aspergillus nidulans and comparative analysis with A. fumigatus and A. oryzae.</title>
        <authorList>
            <person name="Galagan J.E."/>
            <person name="Calvo S.E."/>
            <person name="Cuomo C."/>
            <person name="Ma L.-J."/>
            <person name="Wortman J.R."/>
            <person name="Batzoglou S."/>
            <person name="Lee S.-I."/>
            <person name="Bastuerkmen M."/>
            <person name="Spevak C.C."/>
            <person name="Clutterbuck J."/>
            <person name="Kapitonov V."/>
            <person name="Jurka J."/>
            <person name="Scazzocchio C."/>
            <person name="Farman M.L."/>
            <person name="Butler J."/>
            <person name="Purcell S."/>
            <person name="Harris S."/>
            <person name="Braus G.H."/>
            <person name="Draht O."/>
            <person name="Busch S."/>
            <person name="D'Enfert C."/>
            <person name="Bouchier C."/>
            <person name="Goldman G.H."/>
            <person name="Bell-Pedersen D."/>
            <person name="Griffiths-Jones S."/>
            <person name="Doonan J.H."/>
            <person name="Yu J."/>
            <person name="Vienken K."/>
            <person name="Pain A."/>
            <person name="Freitag M."/>
            <person name="Selker E.U."/>
            <person name="Archer D.B."/>
            <person name="Penalva M.A."/>
            <person name="Oakley B.R."/>
            <person name="Momany M."/>
            <person name="Tanaka T."/>
            <person name="Kumagai T."/>
            <person name="Asai K."/>
            <person name="Machida M."/>
            <person name="Nierman W.C."/>
            <person name="Denning D.W."/>
            <person name="Caddick M.X."/>
            <person name="Hynes M."/>
            <person name="Paoletti M."/>
            <person name="Fischer R."/>
            <person name="Miller B.L."/>
            <person name="Dyer P.S."/>
            <person name="Sachs M.S."/>
            <person name="Osmani S.A."/>
            <person name="Birren B.W."/>
        </authorList>
    </citation>
    <scope>NUCLEOTIDE SEQUENCE [LARGE SCALE GENOMIC DNA]</scope>
    <source>
        <strain>FGSC A4 / ATCC 38163 / CBS 112.46 / NRRL 194 / M139</strain>
    </source>
</reference>
<reference key="3">
    <citation type="journal article" date="2009" name="Fungal Genet. Biol.">
        <title>The 2008 update of the Aspergillus nidulans genome annotation: a community effort.</title>
        <authorList>
            <person name="Wortman J.R."/>
            <person name="Gilsenan J.M."/>
            <person name="Joardar V."/>
            <person name="Deegan J."/>
            <person name="Clutterbuck J."/>
            <person name="Andersen M.R."/>
            <person name="Archer D."/>
            <person name="Bencina M."/>
            <person name="Braus G."/>
            <person name="Coutinho P."/>
            <person name="von Dohren H."/>
            <person name="Doonan J."/>
            <person name="Driessen A.J."/>
            <person name="Durek P."/>
            <person name="Espeso E."/>
            <person name="Fekete E."/>
            <person name="Flipphi M."/>
            <person name="Estrada C.G."/>
            <person name="Geysens S."/>
            <person name="Goldman G."/>
            <person name="de Groot P.W."/>
            <person name="Hansen K."/>
            <person name="Harris S.D."/>
            <person name="Heinekamp T."/>
            <person name="Helmstaedt K."/>
            <person name="Henrissat B."/>
            <person name="Hofmann G."/>
            <person name="Homan T."/>
            <person name="Horio T."/>
            <person name="Horiuchi H."/>
            <person name="James S."/>
            <person name="Jones M."/>
            <person name="Karaffa L."/>
            <person name="Karanyi Z."/>
            <person name="Kato M."/>
            <person name="Keller N."/>
            <person name="Kelly D.E."/>
            <person name="Kiel J.A."/>
            <person name="Kim J.M."/>
            <person name="van der Klei I.J."/>
            <person name="Klis F.M."/>
            <person name="Kovalchuk A."/>
            <person name="Krasevec N."/>
            <person name="Kubicek C.P."/>
            <person name="Liu B."/>
            <person name="Maccabe A."/>
            <person name="Meyer V."/>
            <person name="Mirabito P."/>
            <person name="Miskei M."/>
            <person name="Mos M."/>
            <person name="Mullins J."/>
            <person name="Nelson D.R."/>
            <person name="Nielsen J."/>
            <person name="Oakley B.R."/>
            <person name="Osmani S.A."/>
            <person name="Pakula T."/>
            <person name="Paszewski A."/>
            <person name="Paulsen I."/>
            <person name="Pilsyk S."/>
            <person name="Pocsi I."/>
            <person name="Punt P.J."/>
            <person name="Ram A.F."/>
            <person name="Ren Q."/>
            <person name="Robellet X."/>
            <person name="Robson G."/>
            <person name="Seiboth B."/>
            <person name="van Solingen P."/>
            <person name="Specht T."/>
            <person name="Sun J."/>
            <person name="Taheri-Talesh N."/>
            <person name="Takeshita N."/>
            <person name="Ussery D."/>
            <person name="vanKuyk P.A."/>
            <person name="Visser H."/>
            <person name="van de Vondervoort P.J."/>
            <person name="de Vries R.P."/>
            <person name="Walton J."/>
            <person name="Xiang X."/>
            <person name="Xiong Y."/>
            <person name="Zeng A.P."/>
            <person name="Brandt B.W."/>
            <person name="Cornell M.J."/>
            <person name="van den Hondel C.A."/>
            <person name="Visser J."/>
            <person name="Oliver S.G."/>
            <person name="Turner G."/>
        </authorList>
    </citation>
    <scope>GENOME REANNOTATION</scope>
    <source>
        <strain>FGSC A4 / ATCC 38163 / CBS 112.46 / NRRL 194 / M139</strain>
    </source>
</reference>
<evidence type="ECO:0000255" key="1">
    <source>
        <dbReference type="HAMAP-Rule" id="MF_03108"/>
    </source>
</evidence>
<evidence type="ECO:0000256" key="2">
    <source>
        <dbReference type="SAM" id="MobiDB-lite"/>
    </source>
</evidence>
<evidence type="ECO:0000269" key="3">
    <source>
    </source>
</evidence>
<sequence>MGSNECPYSRQNANIGGGGQNNRDWWPDDLKLNILRQHNSVSNPLDKGFDYTAAFNSLDYFGLKRDLEALMTDSQDWWPADFGHYGGLFIRMAWHSAGTYRVFDGRGGGGQGQQRFAPLNSWPDNVSLDKARRLLWPIKQKYGSKISWADLLILAGNVALESMGFKTFGFAGGRSDTWEADQSVFWGGEKEWLGNDVRYLNGELDNPLAASHMGLIYVNPEGPNKNPDPVLAAKDIRITFGRMAMNDEETVALIAGGHTFGKTHGAGPATHLGKEPHGAGIELQGLGWESGFESGTGRHAITSGLEVIWTKTPTKWSNQFFEYLFKYDWELTKSPAGAHQYVAKGVEPFIPDPFDPSIKHPPRMLTTDLSLRYDPEYEKISRRFLENPDQFADAFARAWFKLTHRDVGPRVLYQGPEVPSEVLIWQDPVPPLDHPVIDNDDIATLKKAILNSGISHTDLFSTAWASASTFRGSDKRGGANGARIRLSPQKNWKVNSQPWLSESLAALEKIQKQFNDAQSTDKRVSLADLIVLAGAASLEKAARDAGHNVSVSFTPGRTDATQEQTDVDSFNNLEPIADGFRNYGRGTPRVLTEDFLIDKAQLLNLSPPELTVLIGGLRVLNNNYDRSNLGVFTKRPGQLTNDFFVNLLDMGVQWKPADDTNEIFIGSDRKTGQARWKASRADLVFGSHAELRAISEVYGSSDGEAKFVKDFVAAWEKVSNLDRFDLKQTGLAQRIKPQL</sequence>
<protein>
    <recommendedName>
        <fullName evidence="1">Catalase-peroxidase</fullName>
        <shortName evidence="1">CP</shortName>
        <ecNumber evidence="1">1.11.1.21</ecNumber>
    </recommendedName>
    <alternativeName>
        <fullName evidence="1">Peroxidase/catalase</fullName>
    </alternativeName>
</protein>
<feature type="chain" id="PRO_0000354106" description="Catalase-peroxidase">
    <location>
        <begin position="1"/>
        <end position="739"/>
    </location>
</feature>
<feature type="region of interest" description="Disordered" evidence="2">
    <location>
        <begin position="1"/>
        <end position="20"/>
    </location>
</feature>
<feature type="active site" description="Proton acceptor" evidence="1">
    <location>
        <position position="95"/>
    </location>
</feature>
<feature type="binding site" description="axial binding residue" evidence="1">
    <location>
        <position position="258"/>
    </location>
    <ligand>
        <name>heme b</name>
        <dbReference type="ChEBI" id="CHEBI:60344"/>
    </ligand>
    <ligandPart>
        <name>Fe</name>
        <dbReference type="ChEBI" id="CHEBI:18248"/>
    </ligandPart>
</feature>
<feature type="site" description="Transition state stabilizer" evidence="1">
    <location>
        <position position="91"/>
    </location>
</feature>
<feature type="cross-link" description="Tryptophyl-tyrosyl-methioninium (Trp-Tyr) (with M-243)" evidence="1">
    <location>
        <begin position="94"/>
        <end position="217"/>
    </location>
</feature>
<feature type="cross-link" description="Tryptophyl-tyrosyl-methioninium (Tyr-Met) (with W-94)" evidence="1">
    <location>
        <begin position="217"/>
        <end position="243"/>
    </location>
</feature>
<keyword id="KW-0963">Cytoplasm</keyword>
<keyword id="KW-0903">Direct protein sequencing</keyword>
<keyword id="KW-0349">Heme</keyword>
<keyword id="KW-0376">Hydrogen peroxide</keyword>
<keyword id="KW-0408">Iron</keyword>
<keyword id="KW-0479">Metal-binding</keyword>
<keyword id="KW-0560">Oxidoreductase</keyword>
<keyword id="KW-0575">Peroxidase</keyword>
<keyword id="KW-1185">Reference proteome</keyword>
<name>KATG_EMENI</name>